<protein>
    <recommendedName>
        <fullName evidence="1">mRNA cleavage and polyadenylation factor clp1</fullName>
    </recommendedName>
    <alternativeName>
        <fullName>Polyadenylation factor 7</fullName>
    </alternativeName>
</protein>
<dbReference type="EMBL" id="CM002239">
    <property type="protein sequence ID" value="EAA33340.2"/>
    <property type="status" value="ALT_SEQ"/>
    <property type="molecule type" value="Genomic_DNA"/>
</dbReference>
<dbReference type="RefSeq" id="XP_962576.2">
    <property type="nucleotide sequence ID" value="XM_957483.2"/>
</dbReference>
<dbReference type="SMR" id="Q7SAB7"/>
<dbReference type="FunCoup" id="Q7SAB7">
    <property type="interactions" value="787"/>
</dbReference>
<dbReference type="STRING" id="367110.Q7SAB7"/>
<dbReference type="PaxDb" id="5141-EFNCRP00000006086"/>
<dbReference type="EnsemblFungi" id="EAA33340">
    <property type="protein sequence ID" value="EAA33340"/>
    <property type="gene ID" value="NCU06314"/>
</dbReference>
<dbReference type="GeneID" id="3878710"/>
<dbReference type="KEGG" id="ncr:NCU06314"/>
<dbReference type="HOGENOM" id="CLU_018195_3_1_1"/>
<dbReference type="InParanoid" id="Q7SAB7"/>
<dbReference type="OMA" id="VQYVNCH"/>
<dbReference type="OrthoDB" id="258143at2759"/>
<dbReference type="Proteomes" id="UP000001805">
    <property type="component" value="Chromosome 4, Linkage Group IV"/>
</dbReference>
<dbReference type="GO" id="GO:0005849">
    <property type="term" value="C:mRNA cleavage factor complex"/>
    <property type="evidence" value="ECO:0007669"/>
    <property type="project" value="UniProtKB-UniRule"/>
</dbReference>
<dbReference type="GO" id="GO:0005634">
    <property type="term" value="C:nucleus"/>
    <property type="evidence" value="ECO:0000318"/>
    <property type="project" value="GO_Central"/>
</dbReference>
<dbReference type="GO" id="GO:0005524">
    <property type="term" value="F:ATP binding"/>
    <property type="evidence" value="ECO:0007669"/>
    <property type="project" value="UniProtKB-UniRule"/>
</dbReference>
<dbReference type="GO" id="GO:0016887">
    <property type="term" value="F:ATP hydrolysis activity"/>
    <property type="evidence" value="ECO:0007669"/>
    <property type="project" value="InterPro"/>
</dbReference>
<dbReference type="GO" id="GO:0051731">
    <property type="term" value="F:polynucleotide 5'-hydroxyl-kinase activity"/>
    <property type="evidence" value="ECO:0000318"/>
    <property type="project" value="GO_Central"/>
</dbReference>
<dbReference type="GO" id="GO:0031124">
    <property type="term" value="P:mRNA 3'-end processing"/>
    <property type="evidence" value="ECO:0007669"/>
    <property type="project" value="UniProtKB-UniRule"/>
</dbReference>
<dbReference type="GO" id="GO:0006388">
    <property type="term" value="P:tRNA splicing, via endonucleolytic cleavage and ligation"/>
    <property type="evidence" value="ECO:0000318"/>
    <property type="project" value="GO_Central"/>
</dbReference>
<dbReference type="FunFam" id="2.60.120.1030:FF:000005">
    <property type="entry name" value="mRNA cleavage and polyadenylation factor CLP1"/>
    <property type="match status" value="1"/>
</dbReference>
<dbReference type="Gene3D" id="2.60.120.1030">
    <property type="entry name" value="Clp1, DNA binding domain"/>
    <property type="match status" value="1"/>
</dbReference>
<dbReference type="Gene3D" id="3.40.50.300">
    <property type="entry name" value="P-loop containing nucleotide triphosphate hydrolases"/>
    <property type="match status" value="1"/>
</dbReference>
<dbReference type="Gene3D" id="2.40.30.330">
    <property type="entry name" value="Pre-mRNA cleavage complex subunit Clp1, C-terminal domain"/>
    <property type="match status" value="1"/>
</dbReference>
<dbReference type="HAMAP" id="MF_03035">
    <property type="entry name" value="Clp1"/>
    <property type="match status" value="1"/>
</dbReference>
<dbReference type="InterPro" id="IPR003593">
    <property type="entry name" value="AAA+_ATPase"/>
</dbReference>
<dbReference type="InterPro" id="IPR028606">
    <property type="entry name" value="Clp1"/>
</dbReference>
<dbReference type="InterPro" id="IPR045116">
    <property type="entry name" value="Clp1/Grc3"/>
</dbReference>
<dbReference type="InterPro" id="IPR010655">
    <property type="entry name" value="Clp1_C"/>
</dbReference>
<dbReference type="InterPro" id="IPR038238">
    <property type="entry name" value="Clp1_C_sf"/>
</dbReference>
<dbReference type="InterPro" id="IPR032324">
    <property type="entry name" value="Clp1_N"/>
</dbReference>
<dbReference type="InterPro" id="IPR038239">
    <property type="entry name" value="Clp1_N_sf"/>
</dbReference>
<dbReference type="InterPro" id="IPR032319">
    <property type="entry name" value="CLP1_P"/>
</dbReference>
<dbReference type="InterPro" id="IPR027417">
    <property type="entry name" value="P-loop_NTPase"/>
</dbReference>
<dbReference type="PANTHER" id="PTHR12755">
    <property type="entry name" value="CLEAVAGE/POLYADENYLATION FACTOR IA SUBUNIT CLP1P"/>
    <property type="match status" value="1"/>
</dbReference>
<dbReference type="PANTHER" id="PTHR12755:SF6">
    <property type="entry name" value="POLYRIBONUCLEOTIDE 5'-HYDROXYL-KINASE CLP1"/>
    <property type="match status" value="1"/>
</dbReference>
<dbReference type="Pfam" id="PF06807">
    <property type="entry name" value="Clp1"/>
    <property type="match status" value="1"/>
</dbReference>
<dbReference type="Pfam" id="PF16573">
    <property type="entry name" value="CLP1_N"/>
    <property type="match status" value="1"/>
</dbReference>
<dbReference type="Pfam" id="PF16575">
    <property type="entry name" value="CLP1_P"/>
    <property type="match status" value="1"/>
</dbReference>
<dbReference type="SMART" id="SM00382">
    <property type="entry name" value="AAA"/>
    <property type="match status" value="1"/>
</dbReference>
<dbReference type="SUPFAM" id="SSF52540">
    <property type="entry name" value="P-loop containing nucleoside triphosphate hydrolases"/>
    <property type="match status" value="2"/>
</dbReference>
<gene>
    <name type="primary">paa-7</name>
    <name type="synonym">clp1</name>
    <name type="ORF">NCU06314</name>
</gene>
<sequence>MSIPGLGQIAPQAPTTTQRTINLRPFGEWRFSIPHQHSTFSSNSSAAGVTVRLVAGTAERDGTELAPNCVYTFLPGTKSKLFTDQGCTLEINNTGGYPLEDRVVEHPPEQSPMLSYINLHFGLQDHERAAAAQAQQQHPTHHQQQQQGRGAGAGVARSKPGPRVLICGPPGVGKTSLAKLLAALATRMGSQPLVANLNPTDGLLCLPGTLGAAVFGTLMDVEEPAGGFGVTNTPISGPSAVPVKNPLTFYFGHEKVEDDVDMWRQMTERLAVLARRKFERNRDVRVAGLLVDTAPVEAGDKEGQELLGWAVRQFDANFVVVLGSEQLKTELGQRFASEKTSFEEPITVLGLDKSDGAVQIDKAWRQKSTETAIKEYFFGGIKARLSPFTQSASFDELVVFKAPDEPYEGAPVLERVEITPEMAHWTLAVMIASVTDSPQAIRFSSVLGFIVIADVDQERRRVKFLSPVSGRLGNHPLIWGRWPEPYLNLLA</sequence>
<proteinExistence type="inferred from homology"/>
<name>CLP1_NEUCR</name>
<comment type="function">
    <text evidence="1">Required for endonucleolytic cleavage during polyadenylation-dependent pre-mRNA 3'-end formation.</text>
</comment>
<comment type="subunit">
    <text evidence="1">Component of a pre-mRNA cleavage factor complex. Interacts directly with PCF11.</text>
</comment>
<comment type="subcellular location">
    <subcellularLocation>
        <location evidence="1">Nucleus</location>
    </subcellularLocation>
</comment>
<comment type="similarity">
    <text evidence="1">Belongs to the Clp1 family. Clp1 subfamily.</text>
</comment>
<comment type="caution">
    <text evidence="3">May lack the polyribonucleotide 5'-hydroxyl-kinase and polynucleotide 5'-hydroxyl-kinase activities that are characteristic of the human ortholog.</text>
</comment>
<comment type="sequence caution" evidence="3">
    <conflict type="erroneous gene model prediction">
        <sequence resource="EMBL-CDS" id="EAA33340"/>
    </conflict>
</comment>
<organism>
    <name type="scientific">Neurospora crassa (strain ATCC 24698 / 74-OR23-1A / CBS 708.71 / DSM 1257 / FGSC 987)</name>
    <dbReference type="NCBI Taxonomy" id="367110"/>
    <lineage>
        <taxon>Eukaryota</taxon>
        <taxon>Fungi</taxon>
        <taxon>Dikarya</taxon>
        <taxon>Ascomycota</taxon>
        <taxon>Pezizomycotina</taxon>
        <taxon>Sordariomycetes</taxon>
        <taxon>Sordariomycetidae</taxon>
        <taxon>Sordariales</taxon>
        <taxon>Sordariaceae</taxon>
        <taxon>Neurospora</taxon>
    </lineage>
</organism>
<evidence type="ECO:0000255" key="1">
    <source>
        <dbReference type="HAMAP-Rule" id="MF_03035"/>
    </source>
</evidence>
<evidence type="ECO:0000256" key="2">
    <source>
        <dbReference type="SAM" id="MobiDB-lite"/>
    </source>
</evidence>
<evidence type="ECO:0000305" key="3"/>
<reference key="1">
    <citation type="journal article" date="2003" name="Nature">
        <title>The genome sequence of the filamentous fungus Neurospora crassa.</title>
        <authorList>
            <person name="Galagan J.E."/>
            <person name="Calvo S.E."/>
            <person name="Borkovich K.A."/>
            <person name="Selker E.U."/>
            <person name="Read N.D."/>
            <person name="Jaffe D.B."/>
            <person name="FitzHugh W."/>
            <person name="Ma L.-J."/>
            <person name="Smirnov S."/>
            <person name="Purcell S."/>
            <person name="Rehman B."/>
            <person name="Elkins T."/>
            <person name="Engels R."/>
            <person name="Wang S."/>
            <person name="Nielsen C.B."/>
            <person name="Butler J."/>
            <person name="Endrizzi M."/>
            <person name="Qui D."/>
            <person name="Ianakiev P."/>
            <person name="Bell-Pedersen D."/>
            <person name="Nelson M.A."/>
            <person name="Werner-Washburne M."/>
            <person name="Selitrennikoff C.P."/>
            <person name="Kinsey J.A."/>
            <person name="Braun E.L."/>
            <person name="Zelter A."/>
            <person name="Schulte U."/>
            <person name="Kothe G.O."/>
            <person name="Jedd G."/>
            <person name="Mewes H.-W."/>
            <person name="Staben C."/>
            <person name="Marcotte E."/>
            <person name="Greenberg D."/>
            <person name="Roy A."/>
            <person name="Foley K."/>
            <person name="Naylor J."/>
            <person name="Stange-Thomann N."/>
            <person name="Barrett R."/>
            <person name="Gnerre S."/>
            <person name="Kamal M."/>
            <person name="Kamvysselis M."/>
            <person name="Mauceli E.W."/>
            <person name="Bielke C."/>
            <person name="Rudd S."/>
            <person name="Frishman D."/>
            <person name="Krystofova S."/>
            <person name="Rasmussen C."/>
            <person name="Metzenberg R.L."/>
            <person name="Perkins D.D."/>
            <person name="Kroken S."/>
            <person name="Cogoni C."/>
            <person name="Macino G."/>
            <person name="Catcheside D.E.A."/>
            <person name="Li W."/>
            <person name="Pratt R.J."/>
            <person name="Osmani S.A."/>
            <person name="DeSouza C.P.C."/>
            <person name="Glass N.L."/>
            <person name="Orbach M.J."/>
            <person name="Berglund J.A."/>
            <person name="Voelker R."/>
            <person name="Yarden O."/>
            <person name="Plamann M."/>
            <person name="Seiler S."/>
            <person name="Dunlap J.C."/>
            <person name="Radford A."/>
            <person name="Aramayo R."/>
            <person name="Natvig D.O."/>
            <person name="Alex L.A."/>
            <person name="Mannhaupt G."/>
            <person name="Ebbole D.J."/>
            <person name="Freitag M."/>
            <person name="Paulsen I."/>
            <person name="Sachs M.S."/>
            <person name="Lander E.S."/>
            <person name="Nusbaum C."/>
            <person name="Birren B.W."/>
        </authorList>
    </citation>
    <scope>NUCLEOTIDE SEQUENCE [LARGE SCALE GENOMIC DNA]</scope>
    <source>
        <strain>ATCC 24698 / 74-OR23-1A / CBS 708.71 / DSM 1257 / FGSC 987</strain>
    </source>
</reference>
<accession>Q7SAB7</accession>
<feature type="chain" id="PRO_0000375212" description="mRNA cleavage and polyadenylation factor clp1">
    <location>
        <begin position="1"/>
        <end position="491"/>
    </location>
</feature>
<feature type="region of interest" description="Disordered" evidence="2">
    <location>
        <begin position="128"/>
        <end position="160"/>
    </location>
</feature>
<feature type="compositionally biased region" description="Low complexity" evidence="2">
    <location>
        <begin position="130"/>
        <end position="148"/>
    </location>
</feature>
<feature type="binding site" evidence="1">
    <location>
        <position position="28"/>
    </location>
    <ligand>
        <name>ATP</name>
        <dbReference type="ChEBI" id="CHEBI:30616"/>
    </ligand>
</feature>
<feature type="binding site" evidence="1">
    <location>
        <position position="78"/>
    </location>
    <ligand>
        <name>ATP</name>
        <dbReference type="ChEBI" id="CHEBI:30616"/>
    </ligand>
</feature>
<feature type="binding site" evidence="1">
    <location>
        <begin position="171"/>
        <end position="176"/>
    </location>
    <ligand>
        <name>ATP</name>
        <dbReference type="ChEBI" id="CHEBI:30616"/>
    </ligand>
</feature>
<keyword id="KW-0067">ATP-binding</keyword>
<keyword id="KW-0507">mRNA processing</keyword>
<keyword id="KW-0547">Nucleotide-binding</keyword>
<keyword id="KW-0539">Nucleus</keyword>
<keyword id="KW-1185">Reference proteome</keyword>